<name>LOC1_ASPOR</name>
<gene>
    <name type="primary">loc1</name>
    <name type="ORF">AO090701000082</name>
</gene>
<comment type="function">
    <text evidence="1">Required for efficient assembly and nuclear export of the 60S ribosomal subunit.</text>
</comment>
<comment type="subunit">
    <text evidence="1">Component of the 66S pre-ribosomal particle.</text>
</comment>
<comment type="subcellular location">
    <subcellularLocation>
        <location evidence="1">Nucleus</location>
        <location evidence="1">Nucleolus</location>
    </subcellularLocation>
</comment>
<comment type="similarity">
    <text evidence="4">Belongs to the LOC1 family.</text>
</comment>
<accession>Q2U9C6</accession>
<evidence type="ECO:0000250" key="1"/>
<evidence type="ECO:0000255" key="2"/>
<evidence type="ECO:0000256" key="3">
    <source>
        <dbReference type="SAM" id="MobiDB-lite"/>
    </source>
</evidence>
<evidence type="ECO:0000305" key="4"/>
<protein>
    <recommendedName>
        <fullName>60S ribosomal subunit assembly/export protein loc1</fullName>
    </recommendedName>
</protein>
<reference key="1">
    <citation type="journal article" date="2005" name="Nature">
        <title>Genome sequencing and analysis of Aspergillus oryzae.</title>
        <authorList>
            <person name="Machida M."/>
            <person name="Asai K."/>
            <person name="Sano M."/>
            <person name="Tanaka T."/>
            <person name="Kumagai T."/>
            <person name="Terai G."/>
            <person name="Kusumoto K."/>
            <person name="Arima T."/>
            <person name="Akita O."/>
            <person name="Kashiwagi Y."/>
            <person name="Abe K."/>
            <person name="Gomi K."/>
            <person name="Horiuchi H."/>
            <person name="Kitamoto K."/>
            <person name="Kobayashi T."/>
            <person name="Takeuchi M."/>
            <person name="Denning D.W."/>
            <person name="Galagan J.E."/>
            <person name="Nierman W.C."/>
            <person name="Yu J."/>
            <person name="Archer D.B."/>
            <person name="Bennett J.W."/>
            <person name="Bhatnagar D."/>
            <person name="Cleveland T.E."/>
            <person name="Fedorova N.D."/>
            <person name="Gotoh O."/>
            <person name="Horikawa H."/>
            <person name="Hosoyama A."/>
            <person name="Ichinomiya M."/>
            <person name="Igarashi R."/>
            <person name="Iwashita K."/>
            <person name="Juvvadi P.R."/>
            <person name="Kato M."/>
            <person name="Kato Y."/>
            <person name="Kin T."/>
            <person name="Kokubun A."/>
            <person name="Maeda H."/>
            <person name="Maeyama N."/>
            <person name="Maruyama J."/>
            <person name="Nagasaki H."/>
            <person name="Nakajima T."/>
            <person name="Oda K."/>
            <person name="Okada K."/>
            <person name="Paulsen I."/>
            <person name="Sakamoto K."/>
            <person name="Sawano T."/>
            <person name="Takahashi M."/>
            <person name="Takase K."/>
            <person name="Terabayashi Y."/>
            <person name="Wortman J.R."/>
            <person name="Yamada O."/>
            <person name="Yamagata Y."/>
            <person name="Anazawa H."/>
            <person name="Hata Y."/>
            <person name="Koide Y."/>
            <person name="Komori T."/>
            <person name="Koyama Y."/>
            <person name="Minetoki T."/>
            <person name="Suharnan S."/>
            <person name="Tanaka A."/>
            <person name="Isono K."/>
            <person name="Kuhara S."/>
            <person name="Ogasawara N."/>
            <person name="Kikuchi H."/>
        </authorList>
    </citation>
    <scope>NUCLEOTIDE SEQUENCE [LARGE SCALE GENOMIC DNA]</scope>
    <source>
        <strain>ATCC 42149 / RIB 40</strain>
    </source>
</reference>
<organism>
    <name type="scientific">Aspergillus oryzae (strain ATCC 42149 / RIB 40)</name>
    <name type="common">Yellow koji mold</name>
    <dbReference type="NCBI Taxonomy" id="510516"/>
    <lineage>
        <taxon>Eukaryota</taxon>
        <taxon>Fungi</taxon>
        <taxon>Dikarya</taxon>
        <taxon>Ascomycota</taxon>
        <taxon>Pezizomycotina</taxon>
        <taxon>Eurotiomycetes</taxon>
        <taxon>Eurotiomycetidae</taxon>
        <taxon>Eurotiales</taxon>
        <taxon>Aspergillaceae</taxon>
        <taxon>Aspergillus</taxon>
        <taxon>Aspergillus subgen. Circumdati</taxon>
    </lineage>
</organism>
<proteinExistence type="inferred from homology"/>
<dbReference type="EMBL" id="BA000053">
    <property type="protein sequence ID" value="BAE61839.1"/>
    <property type="molecule type" value="Genomic_DNA"/>
</dbReference>
<dbReference type="RefSeq" id="XP_001822972.1">
    <property type="nucleotide sequence ID" value="XM_001822920.2"/>
</dbReference>
<dbReference type="SMR" id="Q2U9C6"/>
<dbReference type="STRING" id="510516.Q2U9C6"/>
<dbReference type="EnsemblFungi" id="BAE61839">
    <property type="protein sequence ID" value="BAE61839"/>
    <property type="gene ID" value="AO090701000082"/>
</dbReference>
<dbReference type="GeneID" id="5995029"/>
<dbReference type="KEGG" id="aor:AO090701000082"/>
<dbReference type="VEuPathDB" id="FungiDB:AO090701000082"/>
<dbReference type="HOGENOM" id="CLU_096593_0_0_1"/>
<dbReference type="OMA" id="NAEQEGH"/>
<dbReference type="OrthoDB" id="132673at5052"/>
<dbReference type="Proteomes" id="UP000006564">
    <property type="component" value="Chromosome 5"/>
</dbReference>
<dbReference type="GO" id="GO:0005730">
    <property type="term" value="C:nucleolus"/>
    <property type="evidence" value="ECO:0007669"/>
    <property type="project" value="UniProtKB-SubCell"/>
</dbReference>
<dbReference type="GO" id="GO:0030687">
    <property type="term" value="C:preribosome, large subunit precursor"/>
    <property type="evidence" value="ECO:0007669"/>
    <property type="project" value="TreeGrafter"/>
</dbReference>
<dbReference type="GO" id="GO:0003729">
    <property type="term" value="F:mRNA binding"/>
    <property type="evidence" value="ECO:0007669"/>
    <property type="project" value="InterPro"/>
</dbReference>
<dbReference type="GO" id="GO:0008298">
    <property type="term" value="P:intracellular mRNA localization"/>
    <property type="evidence" value="ECO:0007669"/>
    <property type="project" value="TreeGrafter"/>
</dbReference>
<dbReference type="GO" id="GO:0051028">
    <property type="term" value="P:mRNA transport"/>
    <property type="evidence" value="ECO:0007669"/>
    <property type="project" value="UniProtKB-KW"/>
</dbReference>
<dbReference type="GO" id="GO:0042273">
    <property type="term" value="P:ribosomal large subunit biogenesis"/>
    <property type="evidence" value="ECO:0007669"/>
    <property type="project" value="InterPro"/>
</dbReference>
<dbReference type="InterPro" id="IPR037650">
    <property type="entry name" value="Loc1"/>
</dbReference>
<dbReference type="PANTHER" id="PTHR28028">
    <property type="entry name" value="60S RIBOSOMAL SUBUNIT ASSEMBLY/EXPORT PROTEIN LOC1"/>
    <property type="match status" value="1"/>
</dbReference>
<dbReference type="PANTHER" id="PTHR28028:SF1">
    <property type="entry name" value="60S RIBOSOMAL SUBUNIT ASSEMBLY_EXPORT PROTEIN LOC1"/>
    <property type="match status" value="1"/>
</dbReference>
<sequence length="190" mass="20929">MAAKPGSTKPSGKDSNKSKPLSSASKVSKKAAKRPPPKEVKSKARTEASQLKKKKKREYTEEELDLPKLNAITPVGVVKPKGKKKGKVFVDDQEGMATILAMVNAEKEGQIESKLQKARQLEEIREAKRKEAEARQAQKKNKLEETKAAIRQKRKRKGDSNEDTKTDTTATQPNGSSSKSKGKRKSVSFA</sequence>
<feature type="chain" id="PRO_0000308787" description="60S ribosomal subunit assembly/export protein loc1">
    <location>
        <begin position="1"/>
        <end position="190"/>
    </location>
</feature>
<feature type="region of interest" description="Disordered" evidence="3">
    <location>
        <begin position="1"/>
        <end position="67"/>
    </location>
</feature>
<feature type="region of interest" description="Disordered" evidence="3">
    <location>
        <begin position="127"/>
        <end position="190"/>
    </location>
</feature>
<feature type="coiled-coil region" evidence="2">
    <location>
        <begin position="103"/>
        <end position="159"/>
    </location>
</feature>
<feature type="compositionally biased region" description="Basic and acidic residues" evidence="3">
    <location>
        <begin position="36"/>
        <end position="46"/>
    </location>
</feature>
<feature type="compositionally biased region" description="Basic and acidic residues" evidence="3">
    <location>
        <begin position="127"/>
        <end position="148"/>
    </location>
</feature>
<feature type="compositionally biased region" description="Basic residues" evidence="3">
    <location>
        <begin position="180"/>
        <end position="190"/>
    </location>
</feature>
<keyword id="KW-0175">Coiled coil</keyword>
<keyword id="KW-0509">mRNA transport</keyword>
<keyword id="KW-0539">Nucleus</keyword>
<keyword id="KW-1185">Reference proteome</keyword>
<keyword id="KW-0690">Ribosome biogenesis</keyword>
<keyword id="KW-0813">Transport</keyword>